<sequence length="1069" mass="116858">MSGQFNNSPRGEDKDVEAGTSSFTEYEDSPFDIASTKNAPVERLRRWRQAALVLNASRRFRYTLDLKREEDKKQMLRKMRAHAQAIRAAHLFKAAASRVTGIASPLPTPGGGDFGIGQEQIVSISRDQNIGALQELGGVRGLSDLLKTNLEKGIHGDDDDILKRKSAFGSNTYPQKKGRSFWRFVWEASQDLTLIILIVAAVASLALGIKTEGIEKGWYDGISIAFAVLLVIVVTATSDYRQSLQFQNLNEEKRNIRLEVTRDGRRVEISIYDIVVGDVIPLNIGDQVPADGVLVAGHSLAVDESSMTGESKIVQKNSTKHPFLMSGCKVADGNGTMLVTGVGVNTEWGLLMASVSEDNGGETPLQVRLNGVATFIGIVGLTVAGVVLFVLVVRYFTGHTKNEQGGPQFIGGKTKFEHVLDDLVEIFTVAVTIVVVAVPEGLPLAVTLTLAYSMRKMMADKALVRRLSACETMGSATTICSDKTGTLTLNEMTVVECYAGLQKMDSPDSSSKLPSAFTSILVEGIAHNTTGSVFRSESGEIQVSGSPTERAILNWAIKLGMDFDALKSESSAVQFFPFNSEKKRGGVAVKSPDSSVHIHWKGAAEIVLGSCTHYMDESESFVDMSEDKMGGLKDAIDDMAARSLRCVAIAFRTFEADKIPTDEEQLSRWELPEDDLILLAIVGIKDPCRPGVKNSVLLCQQAGVKVRMVTGDNIQTAKAIALECGILASDSDASEPNLIEGKVFRSYSEEERDRICEEISVMGRSSPNDKLLLVQSLKRRGHVVAVTGDGTNDAPALHEADIGLAMGIQGTEVAKEKSDIIILDDNFESVVKVVRWGRSVYANIQKFIQFQLTVNVAALVINVVAAISAGEVPLTAVQLLWVNLIMDTLGALALATEPPTDHLMDRAPVGRREPLITNIMWRNLFIQAMYQVTVLLILNFRGISILHLKSKPNAERVKNTVIFNAFVICQVFNEFNARKPDEINIFRGVLRNHLFVGIISITIVLQVVIVEFLGTFASTTKLDWEMWLVCIGIGSISWPLAVIGKLIPVPETPVSQYFRINRWRRNSSG</sequence>
<evidence type="ECO:0000250" key="1"/>
<evidence type="ECO:0000255" key="2"/>
<evidence type="ECO:0000256" key="3">
    <source>
        <dbReference type="SAM" id="MobiDB-lite"/>
    </source>
</evidence>
<evidence type="ECO:0000305" key="4"/>
<evidence type="ECO:0007744" key="5">
    <source>
    </source>
</evidence>
<name>ACA10_ARATH</name>
<gene>
    <name type="primary">ACA10</name>
    <name type="ordered locus">At4g29900</name>
    <name type="ORF">F27B13.140</name>
</gene>
<comment type="function">
    <text evidence="1">This magnesium-dependent enzyme catalyzes the hydrolysis of ATP coupled with the translocation of calcium from the cytosol into the endoplasmic reticulum.</text>
</comment>
<comment type="catalytic activity">
    <reaction>
        <text>Ca(2+)(in) + ATP + H2O = Ca(2+)(out) + ADP + phosphate + H(+)</text>
        <dbReference type="Rhea" id="RHEA:18105"/>
        <dbReference type="ChEBI" id="CHEBI:15377"/>
        <dbReference type="ChEBI" id="CHEBI:15378"/>
        <dbReference type="ChEBI" id="CHEBI:29108"/>
        <dbReference type="ChEBI" id="CHEBI:30616"/>
        <dbReference type="ChEBI" id="CHEBI:43474"/>
        <dbReference type="ChEBI" id="CHEBI:456216"/>
        <dbReference type="EC" id="7.2.2.10"/>
    </reaction>
</comment>
<comment type="activity regulation">
    <text evidence="1">Activated by calmodulin.</text>
</comment>
<comment type="subcellular location">
    <subcellularLocation>
        <location>Membrane</location>
        <topology>Multi-pass membrane protein</topology>
    </subcellularLocation>
</comment>
<comment type="domain">
    <text evidence="1">The N-terminus contains an autoinhibitory calmodulin-binding domain, which binds calmodulin in a calcium-dependent fashion.</text>
</comment>
<comment type="similarity">
    <text evidence="4">Belongs to the cation transport ATPase (P-type) (TC 3.A.3) family. Type IIB subfamily.</text>
</comment>
<comment type="sequence caution" evidence="4">
    <conflict type="erroneous gene model prediction">
        <sequence resource="EMBL-CDS" id="CAB43665"/>
    </conflict>
</comment>
<feature type="initiator methionine" description="Removed" evidence="5">
    <location>
        <position position="1"/>
    </location>
</feature>
<feature type="chain" id="PRO_0000046416" description="Calcium-transporting ATPase 10, plasma membrane-type">
    <location>
        <begin position="2"/>
        <end position="1069"/>
    </location>
</feature>
<feature type="topological domain" description="Cytoplasmic" evidence="2">
    <location>
        <begin position="2"/>
        <end position="180"/>
    </location>
</feature>
<feature type="transmembrane region" description="Helical" evidence="2">
    <location>
        <begin position="181"/>
        <end position="201"/>
    </location>
</feature>
<feature type="topological domain" description="Lumenal" evidence="2">
    <location>
        <begin position="202"/>
        <end position="219"/>
    </location>
</feature>
<feature type="transmembrane region" description="Helical" evidence="2">
    <location>
        <begin position="220"/>
        <end position="240"/>
    </location>
</feature>
<feature type="topological domain" description="Cytoplasmic" evidence="2">
    <location>
        <begin position="241"/>
        <end position="369"/>
    </location>
</feature>
<feature type="transmembrane region" description="Helical" evidence="2">
    <location>
        <begin position="370"/>
        <end position="389"/>
    </location>
</feature>
<feature type="topological domain" description="Lumenal" evidence="2">
    <location>
        <begin position="390"/>
        <end position="426"/>
    </location>
</feature>
<feature type="transmembrane region" description="Helical" evidence="2">
    <location>
        <begin position="427"/>
        <end position="444"/>
    </location>
</feature>
<feature type="topological domain" description="Cytoplasmic" evidence="2">
    <location>
        <begin position="445"/>
        <end position="844"/>
    </location>
</feature>
<feature type="transmembrane region" description="Helical" evidence="2">
    <location>
        <begin position="845"/>
        <end position="863"/>
    </location>
</feature>
<feature type="topological domain" description="Lumenal" evidence="2">
    <location>
        <begin position="864"/>
        <end position="874"/>
    </location>
</feature>
<feature type="transmembrane region" description="Helical" evidence="2">
    <location>
        <begin position="875"/>
        <end position="895"/>
    </location>
</feature>
<feature type="topological domain" description="Cytoplasmic" evidence="2">
    <location>
        <begin position="896"/>
        <end position="915"/>
    </location>
</feature>
<feature type="transmembrane region" description="Helical" evidence="2">
    <location>
        <begin position="916"/>
        <end position="938"/>
    </location>
</feature>
<feature type="topological domain" description="Lumenal" evidence="2">
    <location>
        <begin position="939"/>
        <end position="951"/>
    </location>
</feature>
<feature type="transmembrane region" description="Helical" evidence="2">
    <location>
        <begin position="952"/>
        <end position="973"/>
    </location>
</feature>
<feature type="topological domain" description="Cytoplasmic" evidence="2">
    <location>
        <begin position="974"/>
        <end position="991"/>
    </location>
</feature>
<feature type="transmembrane region" description="Helical" evidence="2">
    <location>
        <begin position="992"/>
        <end position="1013"/>
    </location>
</feature>
<feature type="topological domain" description="Lumenal" evidence="2">
    <location>
        <begin position="1014"/>
        <end position="1023"/>
    </location>
</feature>
<feature type="transmembrane region" description="Helical" evidence="2">
    <location>
        <begin position="1024"/>
        <end position="1045"/>
    </location>
</feature>
<feature type="topological domain" description="Cytoplasmic" evidence="2">
    <location>
        <begin position="1046"/>
        <end position="1069"/>
    </location>
</feature>
<feature type="region of interest" description="Disordered" evidence="3">
    <location>
        <begin position="1"/>
        <end position="29"/>
    </location>
</feature>
<feature type="region of interest" description="Interaction with calmodulin" evidence="1">
    <location>
        <begin position="42"/>
        <end position="53"/>
    </location>
</feature>
<feature type="active site" description="4-aspartylphosphate intermediate" evidence="1">
    <location>
        <position position="482"/>
    </location>
</feature>
<feature type="binding site" evidence="1">
    <location>
        <position position="789"/>
    </location>
    <ligand>
        <name>Mg(2+)</name>
        <dbReference type="ChEBI" id="CHEBI:18420"/>
    </ligand>
</feature>
<feature type="binding site" evidence="1">
    <location>
        <position position="793"/>
    </location>
    <ligand>
        <name>Mg(2+)</name>
        <dbReference type="ChEBI" id="CHEBI:18420"/>
    </ligand>
</feature>
<feature type="modified residue" description="N-acetylserine" evidence="5">
    <location>
        <position position="2"/>
    </location>
</feature>
<accession>Q9SZR1</accession>
<accession>Q9M0D3</accession>
<reference key="1">
    <citation type="journal article" date="1999" name="Nature">
        <title>Sequence and analysis of chromosome 4 of the plant Arabidopsis thaliana.</title>
        <authorList>
            <person name="Mayer K.F.X."/>
            <person name="Schueller C."/>
            <person name="Wambutt R."/>
            <person name="Murphy G."/>
            <person name="Volckaert G."/>
            <person name="Pohl T."/>
            <person name="Duesterhoeft A."/>
            <person name="Stiekema W."/>
            <person name="Entian K.-D."/>
            <person name="Terryn N."/>
            <person name="Harris B."/>
            <person name="Ansorge W."/>
            <person name="Brandt P."/>
            <person name="Grivell L.A."/>
            <person name="Rieger M."/>
            <person name="Weichselgartner M."/>
            <person name="de Simone V."/>
            <person name="Obermaier B."/>
            <person name="Mache R."/>
            <person name="Mueller M."/>
            <person name="Kreis M."/>
            <person name="Delseny M."/>
            <person name="Puigdomenech P."/>
            <person name="Watson M."/>
            <person name="Schmidtheini T."/>
            <person name="Reichert B."/>
            <person name="Portetelle D."/>
            <person name="Perez-Alonso M."/>
            <person name="Boutry M."/>
            <person name="Bancroft I."/>
            <person name="Vos P."/>
            <person name="Hoheisel J."/>
            <person name="Zimmermann W."/>
            <person name="Wedler H."/>
            <person name="Ridley P."/>
            <person name="Langham S.-A."/>
            <person name="McCullagh B."/>
            <person name="Bilham L."/>
            <person name="Robben J."/>
            <person name="van der Schueren J."/>
            <person name="Grymonprez B."/>
            <person name="Chuang Y.-J."/>
            <person name="Vandenbussche F."/>
            <person name="Braeken M."/>
            <person name="Weltjens I."/>
            <person name="Voet M."/>
            <person name="Bastiaens I."/>
            <person name="Aert R."/>
            <person name="Defoor E."/>
            <person name="Weitzenegger T."/>
            <person name="Bothe G."/>
            <person name="Ramsperger U."/>
            <person name="Hilbert H."/>
            <person name="Braun M."/>
            <person name="Holzer E."/>
            <person name="Brandt A."/>
            <person name="Peters S."/>
            <person name="van Staveren M."/>
            <person name="Dirkse W."/>
            <person name="Mooijman P."/>
            <person name="Klein Lankhorst R."/>
            <person name="Rose M."/>
            <person name="Hauf J."/>
            <person name="Koetter P."/>
            <person name="Berneiser S."/>
            <person name="Hempel S."/>
            <person name="Feldpausch M."/>
            <person name="Lamberth S."/>
            <person name="Van den Daele H."/>
            <person name="De Keyser A."/>
            <person name="Buysshaert C."/>
            <person name="Gielen J."/>
            <person name="Villarroel R."/>
            <person name="De Clercq R."/>
            <person name="van Montagu M."/>
            <person name="Rogers J."/>
            <person name="Cronin A."/>
            <person name="Quail M.A."/>
            <person name="Bray-Allen S."/>
            <person name="Clark L."/>
            <person name="Doggett J."/>
            <person name="Hall S."/>
            <person name="Kay M."/>
            <person name="Lennard N."/>
            <person name="McLay K."/>
            <person name="Mayes R."/>
            <person name="Pettett A."/>
            <person name="Rajandream M.A."/>
            <person name="Lyne M."/>
            <person name="Benes V."/>
            <person name="Rechmann S."/>
            <person name="Borkova D."/>
            <person name="Bloecker H."/>
            <person name="Scharfe M."/>
            <person name="Grimm M."/>
            <person name="Loehnert T.-H."/>
            <person name="Dose S."/>
            <person name="de Haan M."/>
            <person name="Maarse A.C."/>
            <person name="Schaefer M."/>
            <person name="Mueller-Auer S."/>
            <person name="Gabel C."/>
            <person name="Fuchs M."/>
            <person name="Fartmann B."/>
            <person name="Granderath K."/>
            <person name="Dauner D."/>
            <person name="Herzl A."/>
            <person name="Neumann S."/>
            <person name="Argiriou A."/>
            <person name="Vitale D."/>
            <person name="Liguori R."/>
            <person name="Piravandi E."/>
            <person name="Massenet O."/>
            <person name="Quigley F."/>
            <person name="Clabauld G."/>
            <person name="Muendlein A."/>
            <person name="Felber R."/>
            <person name="Schnabl S."/>
            <person name="Hiller R."/>
            <person name="Schmidt W."/>
            <person name="Lecharny A."/>
            <person name="Aubourg S."/>
            <person name="Chefdor F."/>
            <person name="Cooke R."/>
            <person name="Berger C."/>
            <person name="Monfort A."/>
            <person name="Casacuberta E."/>
            <person name="Gibbons T."/>
            <person name="Weber N."/>
            <person name="Vandenbol M."/>
            <person name="Bargues M."/>
            <person name="Terol J."/>
            <person name="Torres A."/>
            <person name="Perez-Perez A."/>
            <person name="Purnelle B."/>
            <person name="Bent E."/>
            <person name="Johnson S."/>
            <person name="Tacon D."/>
            <person name="Jesse T."/>
            <person name="Heijnen L."/>
            <person name="Schwarz S."/>
            <person name="Scholler P."/>
            <person name="Heber S."/>
            <person name="Francs P."/>
            <person name="Bielke C."/>
            <person name="Frishman D."/>
            <person name="Haase D."/>
            <person name="Lemcke K."/>
            <person name="Mewes H.-W."/>
            <person name="Stocker S."/>
            <person name="Zaccaria P."/>
            <person name="Bevan M."/>
            <person name="Wilson R.K."/>
            <person name="de la Bastide M."/>
            <person name="Habermann K."/>
            <person name="Parnell L."/>
            <person name="Dedhia N."/>
            <person name="Gnoj L."/>
            <person name="Schutz K."/>
            <person name="Huang E."/>
            <person name="Spiegel L."/>
            <person name="Sekhon M."/>
            <person name="Murray J."/>
            <person name="Sheet P."/>
            <person name="Cordes M."/>
            <person name="Abu-Threideh J."/>
            <person name="Stoneking T."/>
            <person name="Kalicki J."/>
            <person name="Graves T."/>
            <person name="Harmon G."/>
            <person name="Edwards J."/>
            <person name="Latreille P."/>
            <person name="Courtney L."/>
            <person name="Cloud J."/>
            <person name="Abbott A."/>
            <person name="Scott K."/>
            <person name="Johnson D."/>
            <person name="Minx P."/>
            <person name="Bentley D."/>
            <person name="Fulton B."/>
            <person name="Miller N."/>
            <person name="Greco T."/>
            <person name="Kemp K."/>
            <person name="Kramer J."/>
            <person name="Fulton L."/>
            <person name="Mardis E."/>
            <person name="Dante M."/>
            <person name="Pepin K."/>
            <person name="Hillier L.W."/>
            <person name="Nelson J."/>
            <person name="Spieth J."/>
            <person name="Ryan E."/>
            <person name="Andrews S."/>
            <person name="Geisel C."/>
            <person name="Layman D."/>
            <person name="Du H."/>
            <person name="Ali J."/>
            <person name="Berghoff A."/>
            <person name="Jones K."/>
            <person name="Drone K."/>
            <person name="Cotton M."/>
            <person name="Joshu C."/>
            <person name="Antonoiu B."/>
            <person name="Zidanic M."/>
            <person name="Strong C."/>
            <person name="Sun H."/>
            <person name="Lamar B."/>
            <person name="Yordan C."/>
            <person name="Ma P."/>
            <person name="Zhong J."/>
            <person name="Preston R."/>
            <person name="Vil D."/>
            <person name="Shekher M."/>
            <person name="Matero A."/>
            <person name="Shah R."/>
            <person name="Swaby I.K."/>
            <person name="O'Shaughnessy A."/>
            <person name="Rodriguez M."/>
            <person name="Hoffman J."/>
            <person name="Till S."/>
            <person name="Granat S."/>
            <person name="Shohdy N."/>
            <person name="Hasegawa A."/>
            <person name="Hameed A."/>
            <person name="Lodhi M."/>
            <person name="Johnson A."/>
            <person name="Chen E."/>
            <person name="Marra M.A."/>
            <person name="Martienssen R."/>
            <person name="McCombie W.R."/>
        </authorList>
    </citation>
    <scope>NUCLEOTIDE SEQUENCE [LARGE SCALE GENOMIC DNA]</scope>
    <source>
        <strain>cv. Columbia</strain>
    </source>
</reference>
<reference key="2">
    <citation type="journal article" date="2017" name="Plant J.">
        <title>Araport11: a complete reannotation of the Arabidopsis thaliana reference genome.</title>
        <authorList>
            <person name="Cheng C.Y."/>
            <person name="Krishnakumar V."/>
            <person name="Chan A.P."/>
            <person name="Thibaud-Nissen F."/>
            <person name="Schobel S."/>
            <person name="Town C.D."/>
        </authorList>
    </citation>
    <scope>GENOME REANNOTATION</scope>
    <source>
        <strain>cv. Columbia</strain>
    </source>
</reference>
<reference key="3">
    <citation type="journal article" date="2004" name="Plant Cell">
        <title>Phosphoproteomics of the Arabidopsis plasma membrane and a new phosphorylation site database.</title>
        <authorList>
            <person name="Nuehse T.S."/>
            <person name="Stensballe A."/>
            <person name="Jensen O.N."/>
            <person name="Peck S.C."/>
        </authorList>
    </citation>
    <scope>IDENTIFICATION BY MASS SPECTROMETRY [LARGE SCALE ANALYSIS]</scope>
</reference>
<reference key="4">
    <citation type="journal article" date="2009" name="Plant Physiol.">
        <title>Large-scale Arabidopsis phosphoproteome profiling reveals novel chloroplast kinase substrates and phosphorylation networks.</title>
        <authorList>
            <person name="Reiland S."/>
            <person name="Messerli G."/>
            <person name="Baerenfaller K."/>
            <person name="Gerrits B."/>
            <person name="Endler A."/>
            <person name="Grossmann J."/>
            <person name="Gruissem W."/>
            <person name="Baginsky S."/>
        </authorList>
    </citation>
    <scope>IDENTIFICATION BY MASS SPECTROMETRY [LARGE SCALE ANALYSIS]</scope>
</reference>
<reference key="5">
    <citation type="journal article" date="2012" name="Mol. Cell. Proteomics">
        <title>Comparative large-scale characterisation of plant vs. mammal proteins reveals similar and idiosyncratic N-alpha acetylation features.</title>
        <authorList>
            <person name="Bienvenut W.V."/>
            <person name="Sumpton D."/>
            <person name="Martinez A."/>
            <person name="Lilla S."/>
            <person name="Espagne C."/>
            <person name="Meinnel T."/>
            <person name="Giglione C."/>
        </authorList>
    </citation>
    <scope>ACETYLATION [LARGE SCALE ANALYSIS] AT SER-2</scope>
    <scope>CLEAVAGE OF INITIATOR METHIONINE [LARGE SCALE ANALYSIS]</scope>
    <scope>IDENTIFICATION BY MASS SPECTROMETRY [LARGE SCALE ANALYSIS]</scope>
</reference>
<proteinExistence type="evidence at protein level"/>
<organism>
    <name type="scientific">Arabidopsis thaliana</name>
    <name type="common">Mouse-ear cress</name>
    <dbReference type="NCBI Taxonomy" id="3702"/>
    <lineage>
        <taxon>Eukaryota</taxon>
        <taxon>Viridiplantae</taxon>
        <taxon>Streptophyta</taxon>
        <taxon>Embryophyta</taxon>
        <taxon>Tracheophyta</taxon>
        <taxon>Spermatophyta</taxon>
        <taxon>Magnoliopsida</taxon>
        <taxon>eudicotyledons</taxon>
        <taxon>Gunneridae</taxon>
        <taxon>Pentapetalae</taxon>
        <taxon>rosids</taxon>
        <taxon>malvids</taxon>
        <taxon>Brassicales</taxon>
        <taxon>Brassicaceae</taxon>
        <taxon>Camelineae</taxon>
        <taxon>Arabidopsis</taxon>
    </lineage>
</organism>
<keyword id="KW-0007">Acetylation</keyword>
<keyword id="KW-0067">ATP-binding</keyword>
<keyword id="KW-0106">Calcium</keyword>
<keyword id="KW-0109">Calcium transport</keyword>
<keyword id="KW-0112">Calmodulin-binding</keyword>
<keyword id="KW-0406">Ion transport</keyword>
<keyword id="KW-0460">Magnesium</keyword>
<keyword id="KW-0472">Membrane</keyword>
<keyword id="KW-0479">Metal-binding</keyword>
<keyword id="KW-0547">Nucleotide-binding</keyword>
<keyword id="KW-1185">Reference proteome</keyword>
<keyword id="KW-1278">Translocase</keyword>
<keyword id="KW-0812">Transmembrane</keyword>
<keyword id="KW-1133">Transmembrane helix</keyword>
<keyword id="KW-0813">Transport</keyword>
<dbReference type="EC" id="7.2.2.10"/>
<dbReference type="EMBL" id="AL050352">
    <property type="protein sequence ID" value="CAB43665.1"/>
    <property type="status" value="ALT_SEQ"/>
    <property type="molecule type" value="Genomic_DNA"/>
</dbReference>
<dbReference type="EMBL" id="AL161575">
    <property type="protein sequence ID" value="CAB79748.1"/>
    <property type="molecule type" value="Genomic_DNA"/>
</dbReference>
<dbReference type="EMBL" id="CP002687">
    <property type="protein sequence ID" value="AEE85690.1"/>
    <property type="molecule type" value="Genomic_DNA"/>
</dbReference>
<dbReference type="EMBL" id="CP002687">
    <property type="protein sequence ID" value="ANM66062.1"/>
    <property type="molecule type" value="Genomic_DNA"/>
</dbReference>
<dbReference type="PIR" id="C85349">
    <property type="entry name" value="C85349"/>
</dbReference>
<dbReference type="PIR" id="T08551">
    <property type="entry name" value="T08551"/>
</dbReference>
<dbReference type="RefSeq" id="NP_001327988.1">
    <property type="nucleotide sequence ID" value="NM_001341980.1"/>
</dbReference>
<dbReference type="RefSeq" id="NP_194719.1">
    <property type="nucleotide sequence ID" value="NM_119136.4"/>
</dbReference>
<dbReference type="SMR" id="Q9SZR1"/>
<dbReference type="BioGRID" id="14399">
    <property type="interactions" value="4"/>
</dbReference>
<dbReference type="FunCoup" id="Q9SZR1">
    <property type="interactions" value="3223"/>
</dbReference>
<dbReference type="IntAct" id="Q9SZR1">
    <property type="interactions" value="1"/>
</dbReference>
<dbReference type="STRING" id="3702.Q9SZR1"/>
<dbReference type="GlyGen" id="Q9SZR1">
    <property type="glycosylation" value="1 site"/>
</dbReference>
<dbReference type="iPTMnet" id="Q9SZR1"/>
<dbReference type="SwissPalm" id="Q9SZR1"/>
<dbReference type="PaxDb" id="3702-AT4G29900.1"/>
<dbReference type="ProteomicsDB" id="244346"/>
<dbReference type="EnsemblPlants" id="AT4G29900.1">
    <property type="protein sequence ID" value="AT4G29900.1"/>
    <property type="gene ID" value="AT4G29900"/>
</dbReference>
<dbReference type="EnsemblPlants" id="AT4G29900.2">
    <property type="protein sequence ID" value="AT4G29900.2"/>
    <property type="gene ID" value="AT4G29900"/>
</dbReference>
<dbReference type="GeneID" id="829112"/>
<dbReference type="Gramene" id="AT4G29900.1">
    <property type="protein sequence ID" value="AT4G29900.1"/>
    <property type="gene ID" value="AT4G29900"/>
</dbReference>
<dbReference type="Gramene" id="AT4G29900.2">
    <property type="protein sequence ID" value="AT4G29900.2"/>
    <property type="gene ID" value="AT4G29900"/>
</dbReference>
<dbReference type="KEGG" id="ath:AT4G29900"/>
<dbReference type="Araport" id="AT4G29900"/>
<dbReference type="TAIR" id="AT4G29900">
    <property type="gene designation" value="ACA10"/>
</dbReference>
<dbReference type="eggNOG" id="KOG0204">
    <property type="taxonomic scope" value="Eukaryota"/>
</dbReference>
<dbReference type="HOGENOM" id="CLU_002360_9_2_1"/>
<dbReference type="InParanoid" id="Q9SZR1"/>
<dbReference type="OMA" id="IAFRTFE"/>
<dbReference type="PhylomeDB" id="Q9SZR1"/>
<dbReference type="BioCyc" id="ARA:AT4G29900-MONOMER"/>
<dbReference type="CD-CODE" id="4299E36E">
    <property type="entry name" value="Nucleolus"/>
</dbReference>
<dbReference type="PRO" id="PR:Q9SZR1"/>
<dbReference type="Proteomes" id="UP000006548">
    <property type="component" value="Chromosome 4"/>
</dbReference>
<dbReference type="ExpressionAtlas" id="Q9SZR1">
    <property type="expression patterns" value="baseline and differential"/>
</dbReference>
<dbReference type="GO" id="GO:0005886">
    <property type="term" value="C:plasma membrane"/>
    <property type="evidence" value="ECO:0007005"/>
    <property type="project" value="TAIR"/>
</dbReference>
<dbReference type="GO" id="GO:0009506">
    <property type="term" value="C:plasmodesma"/>
    <property type="evidence" value="ECO:0007005"/>
    <property type="project" value="TAIR"/>
</dbReference>
<dbReference type="GO" id="GO:0005524">
    <property type="term" value="F:ATP binding"/>
    <property type="evidence" value="ECO:0007669"/>
    <property type="project" value="UniProtKB-KW"/>
</dbReference>
<dbReference type="GO" id="GO:0016887">
    <property type="term" value="F:ATP hydrolysis activity"/>
    <property type="evidence" value="ECO:0007669"/>
    <property type="project" value="InterPro"/>
</dbReference>
<dbReference type="GO" id="GO:0005516">
    <property type="term" value="F:calmodulin binding"/>
    <property type="evidence" value="ECO:0007669"/>
    <property type="project" value="UniProtKB-KW"/>
</dbReference>
<dbReference type="GO" id="GO:0046872">
    <property type="term" value="F:metal ion binding"/>
    <property type="evidence" value="ECO:0007669"/>
    <property type="project" value="UniProtKB-KW"/>
</dbReference>
<dbReference type="GO" id="GO:0005388">
    <property type="term" value="F:P-type calcium transporter activity"/>
    <property type="evidence" value="ECO:0000250"/>
    <property type="project" value="TAIR"/>
</dbReference>
<dbReference type="CDD" id="cd02081">
    <property type="entry name" value="P-type_ATPase_Ca_PMCA-like"/>
    <property type="match status" value="1"/>
</dbReference>
<dbReference type="FunFam" id="1.20.1110.10:FF:000036">
    <property type="entry name" value="Calcium-transporting ATPase"/>
    <property type="match status" value="1"/>
</dbReference>
<dbReference type="FunFam" id="1.20.1110.10:FF:000039">
    <property type="entry name" value="Calcium-transporting ATPase"/>
    <property type="match status" value="1"/>
</dbReference>
<dbReference type="FunFam" id="1.20.5.170:FF:000029">
    <property type="entry name" value="Calcium-transporting ATPase"/>
    <property type="match status" value="1"/>
</dbReference>
<dbReference type="FunFam" id="2.70.150.10:FF:000006">
    <property type="entry name" value="Calcium-transporting ATPase"/>
    <property type="match status" value="1"/>
</dbReference>
<dbReference type="FunFam" id="3.40.1110.10:FF:000013">
    <property type="entry name" value="Calcium-transporting ATPase"/>
    <property type="match status" value="1"/>
</dbReference>
<dbReference type="FunFam" id="3.40.50.1000:FF:000011">
    <property type="entry name" value="Calcium-transporting ATPase"/>
    <property type="match status" value="1"/>
</dbReference>
<dbReference type="FunFam" id="1.20.1110.10:FF:000097">
    <property type="entry name" value="Calcium-transporting ATPase 9 plasma membrane-type"/>
    <property type="match status" value="1"/>
</dbReference>
<dbReference type="Gene3D" id="1.20.5.170">
    <property type="match status" value="1"/>
</dbReference>
<dbReference type="Gene3D" id="3.40.1110.10">
    <property type="entry name" value="Calcium-transporting ATPase, cytoplasmic domain N"/>
    <property type="match status" value="1"/>
</dbReference>
<dbReference type="Gene3D" id="2.70.150.10">
    <property type="entry name" value="Calcium-transporting ATPase, cytoplasmic transduction domain A"/>
    <property type="match status" value="1"/>
</dbReference>
<dbReference type="Gene3D" id="1.20.1110.10">
    <property type="entry name" value="Calcium-transporting ATPase, transmembrane domain"/>
    <property type="match status" value="1"/>
</dbReference>
<dbReference type="Gene3D" id="3.40.50.1000">
    <property type="entry name" value="HAD superfamily/HAD-like"/>
    <property type="match status" value="1"/>
</dbReference>
<dbReference type="InterPro" id="IPR006068">
    <property type="entry name" value="ATPase_P-typ_cation-transptr_C"/>
</dbReference>
<dbReference type="InterPro" id="IPR004014">
    <property type="entry name" value="ATPase_P-typ_cation-transptr_N"/>
</dbReference>
<dbReference type="InterPro" id="IPR023299">
    <property type="entry name" value="ATPase_P-typ_cyto_dom_N"/>
</dbReference>
<dbReference type="InterPro" id="IPR018303">
    <property type="entry name" value="ATPase_P-typ_P_site"/>
</dbReference>
<dbReference type="InterPro" id="IPR023298">
    <property type="entry name" value="ATPase_P-typ_TM_dom_sf"/>
</dbReference>
<dbReference type="InterPro" id="IPR008250">
    <property type="entry name" value="ATPase_P-typ_transduc_dom_A_sf"/>
</dbReference>
<dbReference type="InterPro" id="IPR024750">
    <property type="entry name" value="Ca_ATPase_N_dom"/>
</dbReference>
<dbReference type="InterPro" id="IPR036412">
    <property type="entry name" value="HAD-like_sf"/>
</dbReference>
<dbReference type="InterPro" id="IPR023214">
    <property type="entry name" value="HAD_sf"/>
</dbReference>
<dbReference type="InterPro" id="IPR006408">
    <property type="entry name" value="P-type_ATPase_IIB"/>
</dbReference>
<dbReference type="InterPro" id="IPR001757">
    <property type="entry name" value="P_typ_ATPase"/>
</dbReference>
<dbReference type="InterPro" id="IPR044492">
    <property type="entry name" value="P_typ_ATPase_HD_dom"/>
</dbReference>
<dbReference type="NCBIfam" id="TIGR01517">
    <property type="entry name" value="ATPase-IIB_Ca"/>
    <property type="match status" value="1"/>
</dbReference>
<dbReference type="NCBIfam" id="TIGR01494">
    <property type="entry name" value="ATPase_P-type"/>
    <property type="match status" value="2"/>
</dbReference>
<dbReference type="PANTHER" id="PTHR24093:SF530">
    <property type="entry name" value="CALCIUM-TRANSPORTING ATPASE 10, PLASMA MEMBRANE-TYPE"/>
    <property type="match status" value="1"/>
</dbReference>
<dbReference type="PANTHER" id="PTHR24093">
    <property type="entry name" value="CATION TRANSPORTING ATPASE"/>
    <property type="match status" value="1"/>
</dbReference>
<dbReference type="Pfam" id="PF12515">
    <property type="entry name" value="CaATP_NAI"/>
    <property type="match status" value="1"/>
</dbReference>
<dbReference type="Pfam" id="PF13246">
    <property type="entry name" value="Cation_ATPase"/>
    <property type="match status" value="1"/>
</dbReference>
<dbReference type="Pfam" id="PF00689">
    <property type="entry name" value="Cation_ATPase_C"/>
    <property type="match status" value="1"/>
</dbReference>
<dbReference type="Pfam" id="PF00690">
    <property type="entry name" value="Cation_ATPase_N"/>
    <property type="match status" value="1"/>
</dbReference>
<dbReference type="Pfam" id="PF00122">
    <property type="entry name" value="E1-E2_ATPase"/>
    <property type="match status" value="1"/>
</dbReference>
<dbReference type="PRINTS" id="PR00119">
    <property type="entry name" value="CATATPASE"/>
</dbReference>
<dbReference type="PRINTS" id="PR00121">
    <property type="entry name" value="NAKATPASE"/>
</dbReference>
<dbReference type="SFLD" id="SFLDS00003">
    <property type="entry name" value="Haloacid_Dehalogenase"/>
    <property type="match status" value="1"/>
</dbReference>
<dbReference type="SFLD" id="SFLDF00027">
    <property type="entry name" value="p-type_atpase"/>
    <property type="match status" value="1"/>
</dbReference>
<dbReference type="SMART" id="SM00831">
    <property type="entry name" value="Cation_ATPase_N"/>
    <property type="match status" value="1"/>
</dbReference>
<dbReference type="SUPFAM" id="SSF81653">
    <property type="entry name" value="Calcium ATPase, transduction domain A"/>
    <property type="match status" value="1"/>
</dbReference>
<dbReference type="SUPFAM" id="SSF81665">
    <property type="entry name" value="Calcium ATPase, transmembrane domain M"/>
    <property type="match status" value="1"/>
</dbReference>
<dbReference type="SUPFAM" id="SSF56784">
    <property type="entry name" value="HAD-like"/>
    <property type="match status" value="1"/>
</dbReference>
<dbReference type="SUPFAM" id="SSF81660">
    <property type="entry name" value="Metal cation-transporting ATPase, ATP-binding domain N"/>
    <property type="match status" value="1"/>
</dbReference>
<dbReference type="PROSITE" id="PS00154">
    <property type="entry name" value="ATPASE_E1_E2"/>
    <property type="match status" value="1"/>
</dbReference>
<protein>
    <recommendedName>
        <fullName>Calcium-transporting ATPase 10, plasma membrane-type</fullName>
        <ecNumber>7.2.2.10</ecNumber>
    </recommendedName>
    <alternativeName>
        <fullName>Ca(2+)-ATPase isoform 10</fullName>
    </alternativeName>
</protein>